<organism>
    <name type="scientific">Shewanella frigidimarina (strain NCIMB 400)</name>
    <dbReference type="NCBI Taxonomy" id="318167"/>
    <lineage>
        <taxon>Bacteria</taxon>
        <taxon>Pseudomonadati</taxon>
        <taxon>Pseudomonadota</taxon>
        <taxon>Gammaproteobacteria</taxon>
        <taxon>Alteromonadales</taxon>
        <taxon>Shewanellaceae</taxon>
        <taxon>Shewanella</taxon>
    </lineage>
</organism>
<reference key="1">
    <citation type="submission" date="2006-08" db="EMBL/GenBank/DDBJ databases">
        <title>Complete sequence of Shewanella frigidimarina NCIMB 400.</title>
        <authorList>
            <consortium name="US DOE Joint Genome Institute"/>
            <person name="Copeland A."/>
            <person name="Lucas S."/>
            <person name="Lapidus A."/>
            <person name="Barry K."/>
            <person name="Detter J.C."/>
            <person name="Glavina del Rio T."/>
            <person name="Hammon N."/>
            <person name="Israni S."/>
            <person name="Dalin E."/>
            <person name="Tice H."/>
            <person name="Pitluck S."/>
            <person name="Fredrickson J.K."/>
            <person name="Kolker E."/>
            <person name="McCuel L.A."/>
            <person name="DiChristina T."/>
            <person name="Nealson K.H."/>
            <person name="Newman D."/>
            <person name="Tiedje J.M."/>
            <person name="Zhou J."/>
            <person name="Romine M.F."/>
            <person name="Culley D.E."/>
            <person name="Serres M."/>
            <person name="Chertkov O."/>
            <person name="Brettin T."/>
            <person name="Bruce D."/>
            <person name="Han C."/>
            <person name="Tapia R."/>
            <person name="Gilna P."/>
            <person name="Schmutz J."/>
            <person name="Larimer F."/>
            <person name="Land M."/>
            <person name="Hauser L."/>
            <person name="Kyrpides N."/>
            <person name="Mikhailova N."/>
            <person name="Richardson P."/>
        </authorList>
    </citation>
    <scope>NUCLEOTIDE SEQUENCE [LARGE SCALE GENOMIC DNA]</scope>
    <source>
        <strain>NCIMB 400</strain>
    </source>
</reference>
<dbReference type="EC" id="2.5.1.55" evidence="1"/>
<dbReference type="EMBL" id="CP000447">
    <property type="protein sequence ID" value="ABI70586.1"/>
    <property type="molecule type" value="Genomic_DNA"/>
</dbReference>
<dbReference type="RefSeq" id="WP_011636211.1">
    <property type="nucleotide sequence ID" value="NC_008345.1"/>
</dbReference>
<dbReference type="SMR" id="Q087H9"/>
<dbReference type="STRING" id="318167.Sfri_0728"/>
<dbReference type="KEGG" id="sfr:Sfri_0728"/>
<dbReference type="eggNOG" id="COG2877">
    <property type="taxonomic scope" value="Bacteria"/>
</dbReference>
<dbReference type="HOGENOM" id="CLU_036666_0_0_6"/>
<dbReference type="OrthoDB" id="9776934at2"/>
<dbReference type="UniPathway" id="UPA00030"/>
<dbReference type="UniPathway" id="UPA00357">
    <property type="reaction ID" value="UER00474"/>
</dbReference>
<dbReference type="Proteomes" id="UP000000684">
    <property type="component" value="Chromosome"/>
</dbReference>
<dbReference type="GO" id="GO:0005737">
    <property type="term" value="C:cytoplasm"/>
    <property type="evidence" value="ECO:0007669"/>
    <property type="project" value="UniProtKB-SubCell"/>
</dbReference>
<dbReference type="GO" id="GO:0008676">
    <property type="term" value="F:3-deoxy-8-phosphooctulonate synthase activity"/>
    <property type="evidence" value="ECO:0007669"/>
    <property type="project" value="UniProtKB-UniRule"/>
</dbReference>
<dbReference type="GO" id="GO:0019294">
    <property type="term" value="P:keto-3-deoxy-D-manno-octulosonic acid biosynthetic process"/>
    <property type="evidence" value="ECO:0007669"/>
    <property type="project" value="UniProtKB-UniRule"/>
</dbReference>
<dbReference type="Gene3D" id="3.20.20.70">
    <property type="entry name" value="Aldolase class I"/>
    <property type="match status" value="1"/>
</dbReference>
<dbReference type="HAMAP" id="MF_00056">
    <property type="entry name" value="KDO8P_synth"/>
    <property type="match status" value="1"/>
</dbReference>
<dbReference type="InterPro" id="IPR013785">
    <property type="entry name" value="Aldolase_TIM"/>
</dbReference>
<dbReference type="InterPro" id="IPR006218">
    <property type="entry name" value="DAHP1/KDSA"/>
</dbReference>
<dbReference type="InterPro" id="IPR006269">
    <property type="entry name" value="KDO8P_synthase"/>
</dbReference>
<dbReference type="NCBIfam" id="TIGR01362">
    <property type="entry name" value="KDO8P_synth"/>
    <property type="match status" value="1"/>
</dbReference>
<dbReference type="NCBIfam" id="NF003543">
    <property type="entry name" value="PRK05198.1"/>
    <property type="match status" value="1"/>
</dbReference>
<dbReference type="NCBIfam" id="NF009109">
    <property type="entry name" value="PRK12457.1"/>
    <property type="match status" value="1"/>
</dbReference>
<dbReference type="PANTHER" id="PTHR21057">
    <property type="entry name" value="PHOSPHO-2-DEHYDRO-3-DEOXYHEPTONATE ALDOLASE"/>
    <property type="match status" value="1"/>
</dbReference>
<dbReference type="Pfam" id="PF00793">
    <property type="entry name" value="DAHP_synth_1"/>
    <property type="match status" value="1"/>
</dbReference>
<dbReference type="SUPFAM" id="SSF51569">
    <property type="entry name" value="Aldolase"/>
    <property type="match status" value="1"/>
</dbReference>
<protein>
    <recommendedName>
        <fullName evidence="1">2-dehydro-3-deoxyphosphooctonate aldolase</fullName>
        <ecNumber evidence="1">2.5.1.55</ecNumber>
    </recommendedName>
    <alternativeName>
        <fullName evidence="1">3-deoxy-D-manno-octulosonic acid 8-phosphate synthase</fullName>
    </alternativeName>
    <alternativeName>
        <fullName evidence="1">KDO-8-phosphate synthase</fullName>
        <shortName evidence="1">KDO 8-P synthase</shortName>
        <shortName evidence="1">KDOPS</shortName>
    </alternativeName>
    <alternativeName>
        <fullName evidence="1">Phospho-2-dehydro-3-deoxyoctonate aldolase</fullName>
    </alternativeName>
</protein>
<gene>
    <name evidence="1" type="primary">kdsA</name>
    <name type="ordered locus">Sfri_0728</name>
</gene>
<proteinExistence type="inferred from homology"/>
<comment type="catalytic activity">
    <reaction evidence="1">
        <text>D-arabinose 5-phosphate + phosphoenolpyruvate + H2O = 3-deoxy-alpha-D-manno-2-octulosonate-8-phosphate + phosphate</text>
        <dbReference type="Rhea" id="RHEA:14053"/>
        <dbReference type="ChEBI" id="CHEBI:15377"/>
        <dbReference type="ChEBI" id="CHEBI:43474"/>
        <dbReference type="ChEBI" id="CHEBI:57693"/>
        <dbReference type="ChEBI" id="CHEBI:58702"/>
        <dbReference type="ChEBI" id="CHEBI:85985"/>
        <dbReference type="EC" id="2.5.1.55"/>
    </reaction>
</comment>
<comment type="pathway">
    <text evidence="1">Carbohydrate biosynthesis; 3-deoxy-D-manno-octulosonate biosynthesis; 3-deoxy-D-manno-octulosonate from D-ribulose 5-phosphate: step 2/3.</text>
</comment>
<comment type="pathway">
    <text evidence="1">Bacterial outer membrane biogenesis; lipopolysaccharide biosynthesis.</text>
</comment>
<comment type="subcellular location">
    <subcellularLocation>
        <location evidence="1">Cytoplasm</location>
    </subcellularLocation>
</comment>
<comment type="similarity">
    <text evidence="1">Belongs to the KdsA family.</text>
</comment>
<accession>Q087H9</accession>
<sequence length="283" mass="31167">MDQKIIQLSNNVQVANDKPFVLFGGMNVLESRDLAMSIAEHYVEVTQKLGIPYVFKASFDKANRSSVNSYRGPGMEEGLRIFEEIKSTFNVPMITDVHEIHQCAPVAEVVDIIQLPAFLARQTDLVVAMAKTGAVINVKKPQFLAPHEMRHIITKFNEAGNDNIILCERGSSFGYNNLVVDMLGMDEMKQTGYPVIFDATHALQRPGGRADSAGGRRAQATELARSGMALGLAGLFIEAHPDPDNAKCDGPCALPLHLLEKYLTQMKAVDELVKSFEFIDTSK</sequence>
<evidence type="ECO:0000255" key="1">
    <source>
        <dbReference type="HAMAP-Rule" id="MF_00056"/>
    </source>
</evidence>
<keyword id="KW-0963">Cytoplasm</keyword>
<keyword id="KW-0448">Lipopolysaccharide biosynthesis</keyword>
<keyword id="KW-1185">Reference proteome</keyword>
<keyword id="KW-0808">Transferase</keyword>
<feature type="chain" id="PRO_0000304485" description="2-dehydro-3-deoxyphosphooctonate aldolase">
    <location>
        <begin position="1"/>
        <end position="283"/>
    </location>
</feature>
<name>KDSA_SHEFN</name>